<reference key="1">
    <citation type="journal article" date="2006" name="Proc. Natl. Acad. Sci. U.S.A.">
        <title>Comparative genomics of the lactic acid bacteria.</title>
        <authorList>
            <person name="Makarova K.S."/>
            <person name="Slesarev A."/>
            <person name="Wolf Y.I."/>
            <person name="Sorokin A."/>
            <person name="Mirkin B."/>
            <person name="Koonin E.V."/>
            <person name="Pavlov A."/>
            <person name="Pavlova N."/>
            <person name="Karamychev V."/>
            <person name="Polouchine N."/>
            <person name="Shakhova V."/>
            <person name="Grigoriev I."/>
            <person name="Lou Y."/>
            <person name="Rohksar D."/>
            <person name="Lucas S."/>
            <person name="Huang K."/>
            <person name="Goodstein D.M."/>
            <person name="Hawkins T."/>
            <person name="Plengvidhya V."/>
            <person name="Welker D."/>
            <person name="Hughes J."/>
            <person name="Goh Y."/>
            <person name="Benson A."/>
            <person name="Baldwin K."/>
            <person name="Lee J.-H."/>
            <person name="Diaz-Muniz I."/>
            <person name="Dosti B."/>
            <person name="Smeianov V."/>
            <person name="Wechter W."/>
            <person name="Barabote R."/>
            <person name="Lorca G."/>
            <person name="Altermann E."/>
            <person name="Barrangou R."/>
            <person name="Ganesan B."/>
            <person name="Xie Y."/>
            <person name="Rawsthorne H."/>
            <person name="Tamir D."/>
            <person name="Parker C."/>
            <person name="Breidt F."/>
            <person name="Broadbent J.R."/>
            <person name="Hutkins R."/>
            <person name="O'Sullivan D."/>
            <person name="Steele J."/>
            <person name="Unlu G."/>
            <person name="Saier M.H. Jr."/>
            <person name="Klaenhammer T."/>
            <person name="Richardson P."/>
            <person name="Kozyavkin S."/>
            <person name="Weimer B.C."/>
            <person name="Mills D.A."/>
        </authorList>
    </citation>
    <scope>NUCLEOTIDE SEQUENCE [LARGE SCALE GENOMIC DNA]</scope>
    <source>
        <strain>SK11</strain>
    </source>
</reference>
<feature type="chain" id="PRO_1000067847" description="Large ribosomal subunit protein bL21">
    <location>
        <begin position="1"/>
        <end position="104"/>
    </location>
</feature>
<dbReference type="EMBL" id="CP000425">
    <property type="protein sequence ID" value="ABJ72714.1"/>
    <property type="molecule type" value="Genomic_DNA"/>
</dbReference>
<dbReference type="RefSeq" id="WP_003130644.1">
    <property type="nucleotide sequence ID" value="NC_008527.1"/>
</dbReference>
<dbReference type="SMR" id="Q02ZA8"/>
<dbReference type="GeneID" id="89633203"/>
<dbReference type="KEGG" id="llc:LACR_1180"/>
<dbReference type="HOGENOM" id="CLU_061463_3_1_9"/>
<dbReference type="Proteomes" id="UP000000240">
    <property type="component" value="Chromosome"/>
</dbReference>
<dbReference type="GO" id="GO:0005737">
    <property type="term" value="C:cytoplasm"/>
    <property type="evidence" value="ECO:0007669"/>
    <property type="project" value="UniProtKB-ARBA"/>
</dbReference>
<dbReference type="GO" id="GO:1990904">
    <property type="term" value="C:ribonucleoprotein complex"/>
    <property type="evidence" value="ECO:0007669"/>
    <property type="project" value="UniProtKB-KW"/>
</dbReference>
<dbReference type="GO" id="GO:0005840">
    <property type="term" value="C:ribosome"/>
    <property type="evidence" value="ECO:0007669"/>
    <property type="project" value="UniProtKB-KW"/>
</dbReference>
<dbReference type="GO" id="GO:0019843">
    <property type="term" value="F:rRNA binding"/>
    <property type="evidence" value="ECO:0007669"/>
    <property type="project" value="UniProtKB-UniRule"/>
</dbReference>
<dbReference type="GO" id="GO:0003735">
    <property type="term" value="F:structural constituent of ribosome"/>
    <property type="evidence" value="ECO:0007669"/>
    <property type="project" value="InterPro"/>
</dbReference>
<dbReference type="GO" id="GO:0006412">
    <property type="term" value="P:translation"/>
    <property type="evidence" value="ECO:0007669"/>
    <property type="project" value="UniProtKB-UniRule"/>
</dbReference>
<dbReference type="HAMAP" id="MF_01363">
    <property type="entry name" value="Ribosomal_bL21"/>
    <property type="match status" value="1"/>
</dbReference>
<dbReference type="InterPro" id="IPR028909">
    <property type="entry name" value="bL21-like"/>
</dbReference>
<dbReference type="InterPro" id="IPR036164">
    <property type="entry name" value="bL21-like_sf"/>
</dbReference>
<dbReference type="InterPro" id="IPR001787">
    <property type="entry name" value="Ribosomal_bL21"/>
</dbReference>
<dbReference type="NCBIfam" id="TIGR00061">
    <property type="entry name" value="L21"/>
    <property type="match status" value="1"/>
</dbReference>
<dbReference type="PANTHER" id="PTHR21349">
    <property type="entry name" value="50S RIBOSOMAL PROTEIN L21"/>
    <property type="match status" value="1"/>
</dbReference>
<dbReference type="PANTHER" id="PTHR21349:SF0">
    <property type="entry name" value="LARGE RIBOSOMAL SUBUNIT PROTEIN BL21M"/>
    <property type="match status" value="1"/>
</dbReference>
<dbReference type="Pfam" id="PF00829">
    <property type="entry name" value="Ribosomal_L21p"/>
    <property type="match status" value="1"/>
</dbReference>
<dbReference type="SUPFAM" id="SSF141091">
    <property type="entry name" value="L21p-like"/>
    <property type="match status" value="1"/>
</dbReference>
<accession>Q02ZA8</accession>
<keyword id="KW-0687">Ribonucleoprotein</keyword>
<keyword id="KW-0689">Ribosomal protein</keyword>
<keyword id="KW-0694">RNA-binding</keyword>
<keyword id="KW-0699">rRNA-binding</keyword>
<proteinExistence type="inferred from homology"/>
<protein>
    <recommendedName>
        <fullName evidence="1">Large ribosomal subunit protein bL21</fullName>
    </recommendedName>
    <alternativeName>
        <fullName evidence="2">50S ribosomal protein L21</fullName>
    </alternativeName>
</protein>
<sequence>MSNYAIIKTGGKQVKVEEGSVIYVEKLNVEAGQTVTFDEVIFVGGETTKVGAPLVEGATVVGEVEKHGKQKKVVTFQYKPKKHSHRKQGHRQPYTKVVIKSVNA</sequence>
<evidence type="ECO:0000255" key="1">
    <source>
        <dbReference type="HAMAP-Rule" id="MF_01363"/>
    </source>
</evidence>
<evidence type="ECO:0000305" key="2"/>
<comment type="function">
    <text evidence="1">This protein binds to 23S rRNA in the presence of protein L20.</text>
</comment>
<comment type="subunit">
    <text evidence="1">Part of the 50S ribosomal subunit. Contacts protein L20.</text>
</comment>
<comment type="similarity">
    <text evidence="1">Belongs to the bacterial ribosomal protein bL21 family.</text>
</comment>
<organism>
    <name type="scientific">Lactococcus lactis subsp. cremoris (strain SK11)</name>
    <dbReference type="NCBI Taxonomy" id="272622"/>
    <lineage>
        <taxon>Bacteria</taxon>
        <taxon>Bacillati</taxon>
        <taxon>Bacillota</taxon>
        <taxon>Bacilli</taxon>
        <taxon>Lactobacillales</taxon>
        <taxon>Streptococcaceae</taxon>
        <taxon>Lactococcus</taxon>
        <taxon>Lactococcus cremoris subsp. cremoris</taxon>
    </lineage>
</organism>
<gene>
    <name evidence="1" type="primary">rplU</name>
    <name type="ordered locus">LACR_1180</name>
</gene>
<name>RL21_LACLS</name>